<keyword id="KW-0240">DNA-directed RNA polymerase</keyword>
<keyword id="KW-0548">Nucleotidyltransferase</keyword>
<keyword id="KW-0804">Transcription</keyword>
<keyword id="KW-0808">Transferase</keyword>
<evidence type="ECO:0000255" key="1">
    <source>
        <dbReference type="HAMAP-Rule" id="MF_01321"/>
    </source>
</evidence>
<proteinExistence type="inferred from homology"/>
<gene>
    <name evidence="1" type="primary">rpoB</name>
    <name type="ordered locus">Fphi_1046</name>
</gene>
<accession>B0TX10</accession>
<sequence>MSYSYAEKKRIRKEFGVLPHILDVPYLLSIQTESYRKFLNADDAKGRLHSGLELVLKQSFPVESKNGQYELHYVDYQIGEPTFDETECQVRGATYDAPLNVKLRLVVYNKEALPSEKVVEDIREEYVYMGDIPLMTTNGTFIINGTERVVVSQLHRSPGVFFSKDDSEEGAFSARIIPYRGSWLDFEFDSKGIIWARIDRKRKFCATVILKALGYTQEEILNRFSDSKTISFNNKGFALKLDDLSSMKGEVLKFDIIDEKDNTIVKKNKKLTSRDIKKIKDAGVDSVAIDFDLVSTLRVAKDIVNEATGEVIAYANDDVTENLLEACVEAGMLELEVIDFITTERGRYISDTLKYDLTKNTDEALVEIYKVLRPGDPPAAASVKALFEGLFFIESRYSLSDIGRMKLNARLGSDNVSKDIYTLENSDIVGVIEELINIRDGKGKVDDIDHLGNRRVRSVGEMVENQFRIGLYRVEKGIRESMSLVHKDKLMPKDIVNSKPITAAIKEFFTSGALSQFMDQDNPLSEVTHKRRISALGPGGLSRDRAGFEVRDVHATHYGRLCPIETPEGPNIGLINSLASYARVNDYGFLEAPYRKVVNGKVTNEIEYLSAIDEDHYVIAQASTKLDKNNHFVEDLIQCRSGGEAIFTESSRVQYMDVSAKQMVSAAAALIPFLEHDDANRVLMGANMQRQAVPTLKSEKPLVGTGMEKIVARDSGNCIIARNAGEIAEVDSNRIVVKVDTEKSKTSKLVDIYSLTKFKRSNKNTCINQRPIVNVGDKIEAGDILADGFATDFGELSLGHNLMVAFMPWNGYNFEDSILLSERIVKDDKYTSIHIEEFTCVARDTKLGPEEVTADIPNVSESSLAKLDESGIVHIGANVEAGDILVAKITPKAEQQLTPEERLLRAIFNEKASNVADSSLRMPSGTSGTVINVQVFENDKGGKSKRALKIEKELIDKARKDFDEEFAVIESVVKSSIETDVIGAKIQKAKGLKKGAVLTKEFLATLPFSKWLEISFEDEKLEQKVQNAREYYEEAKIAVDARFEAKKKSIMQSNELSPGVLKTVKVFVAIKKRIQPGDKMAGRHGNKGVVSRVLPVEDMPYMEDGTPVDVCLNPLGIPSRMNIGQILEAHLGLASYGLGKKIEQTLEKTRKAAELRKTLEEVYNSVGDKKVDLKALNDEEILNLCENLKGGVPIATPVFDGAKEEDIKSLLKIGGFATNGQMKLFDGRTGKPFDRHVTVGYMYMLKLDHLVDDKMHARSTGSYSLVTQQPLGGKAQFGGQRFGEMEVWALQAYGAAYTLREMLTVKSDDITGRSKMYKNIVDGKLTMNVDVPESFNVLRNEVRALGIDMDFDYSSEEE</sequence>
<organism>
    <name type="scientific">Francisella philomiragia subsp. philomiragia (strain ATCC 25017 / CCUG 19701 / FSC 153 / O#319-036)</name>
    <dbReference type="NCBI Taxonomy" id="484022"/>
    <lineage>
        <taxon>Bacteria</taxon>
        <taxon>Pseudomonadati</taxon>
        <taxon>Pseudomonadota</taxon>
        <taxon>Gammaproteobacteria</taxon>
        <taxon>Thiotrichales</taxon>
        <taxon>Francisellaceae</taxon>
        <taxon>Francisella</taxon>
    </lineage>
</organism>
<reference key="1">
    <citation type="submission" date="2007-12" db="EMBL/GenBank/DDBJ databases">
        <title>Complete sequence of chromosome of Francisella philomiragia subsp. philomiragia ATCC 25017.</title>
        <authorList>
            <consortium name="US DOE Joint Genome Institute"/>
            <person name="Copeland A."/>
            <person name="Lucas S."/>
            <person name="Lapidus A."/>
            <person name="Barry K."/>
            <person name="Detter J.C."/>
            <person name="Glavina del Rio T."/>
            <person name="Hammon N."/>
            <person name="Israni S."/>
            <person name="Dalin E."/>
            <person name="Tice H."/>
            <person name="Pitluck S."/>
            <person name="Chain P."/>
            <person name="Malfatti S."/>
            <person name="Shin M."/>
            <person name="Vergez L."/>
            <person name="Schmutz J."/>
            <person name="Larimer F."/>
            <person name="Land M."/>
            <person name="Hauser L."/>
            <person name="Richardson P."/>
        </authorList>
    </citation>
    <scope>NUCLEOTIDE SEQUENCE [LARGE SCALE GENOMIC DNA]</scope>
    <source>
        <strain>ATCC 25017 / CCUG 19701 / FSC 153 / O#319-036</strain>
    </source>
</reference>
<dbReference type="EC" id="2.7.7.6" evidence="1"/>
<dbReference type="EMBL" id="CP000937">
    <property type="protein sequence ID" value="ABZ87268.1"/>
    <property type="molecule type" value="Genomic_DNA"/>
</dbReference>
<dbReference type="SMR" id="B0TX10"/>
<dbReference type="KEGG" id="fph:Fphi_1046"/>
<dbReference type="eggNOG" id="COG0085">
    <property type="taxonomic scope" value="Bacteria"/>
</dbReference>
<dbReference type="HOGENOM" id="CLU_000524_4_3_6"/>
<dbReference type="GO" id="GO:0000428">
    <property type="term" value="C:DNA-directed RNA polymerase complex"/>
    <property type="evidence" value="ECO:0007669"/>
    <property type="project" value="UniProtKB-KW"/>
</dbReference>
<dbReference type="GO" id="GO:0003677">
    <property type="term" value="F:DNA binding"/>
    <property type="evidence" value="ECO:0007669"/>
    <property type="project" value="UniProtKB-UniRule"/>
</dbReference>
<dbReference type="GO" id="GO:0003899">
    <property type="term" value="F:DNA-directed RNA polymerase activity"/>
    <property type="evidence" value="ECO:0007669"/>
    <property type="project" value="UniProtKB-UniRule"/>
</dbReference>
<dbReference type="GO" id="GO:0032549">
    <property type="term" value="F:ribonucleoside binding"/>
    <property type="evidence" value="ECO:0007669"/>
    <property type="project" value="InterPro"/>
</dbReference>
<dbReference type="GO" id="GO:0006351">
    <property type="term" value="P:DNA-templated transcription"/>
    <property type="evidence" value="ECO:0007669"/>
    <property type="project" value="UniProtKB-UniRule"/>
</dbReference>
<dbReference type="CDD" id="cd00653">
    <property type="entry name" value="RNA_pol_B_RPB2"/>
    <property type="match status" value="1"/>
</dbReference>
<dbReference type="FunFam" id="3.90.1800.10:FF:000001">
    <property type="entry name" value="DNA-directed RNA polymerase subunit beta"/>
    <property type="match status" value="1"/>
</dbReference>
<dbReference type="Gene3D" id="2.40.50.100">
    <property type="match status" value="1"/>
</dbReference>
<dbReference type="Gene3D" id="2.40.50.150">
    <property type="match status" value="1"/>
</dbReference>
<dbReference type="Gene3D" id="3.90.1100.10">
    <property type="match status" value="3"/>
</dbReference>
<dbReference type="Gene3D" id="2.40.270.10">
    <property type="entry name" value="DNA-directed RNA polymerase, subunit 2, domain 6"/>
    <property type="match status" value="1"/>
</dbReference>
<dbReference type="Gene3D" id="3.90.1800.10">
    <property type="entry name" value="RNA polymerase alpha subunit dimerisation domain"/>
    <property type="match status" value="1"/>
</dbReference>
<dbReference type="Gene3D" id="3.90.1110.10">
    <property type="entry name" value="RNA polymerase Rpb2, domain 2"/>
    <property type="match status" value="1"/>
</dbReference>
<dbReference type="HAMAP" id="MF_01321">
    <property type="entry name" value="RNApol_bact_RpoB"/>
    <property type="match status" value="1"/>
</dbReference>
<dbReference type="InterPro" id="IPR019462">
    <property type="entry name" value="DNA-dir_RNA_pol_bsu_external_1"/>
</dbReference>
<dbReference type="InterPro" id="IPR015712">
    <property type="entry name" value="DNA-dir_RNA_pol_su2"/>
</dbReference>
<dbReference type="InterPro" id="IPR007120">
    <property type="entry name" value="DNA-dir_RNAP_su2_dom"/>
</dbReference>
<dbReference type="InterPro" id="IPR037033">
    <property type="entry name" value="DNA-dir_RNAP_su2_hyb_sf"/>
</dbReference>
<dbReference type="InterPro" id="IPR010243">
    <property type="entry name" value="RNA_pol_bsu_bac"/>
</dbReference>
<dbReference type="InterPro" id="IPR007121">
    <property type="entry name" value="RNA_pol_bsu_CS"/>
</dbReference>
<dbReference type="InterPro" id="IPR007644">
    <property type="entry name" value="RNA_pol_bsu_protrusion"/>
</dbReference>
<dbReference type="InterPro" id="IPR007642">
    <property type="entry name" value="RNA_pol_Rpb2_2"/>
</dbReference>
<dbReference type="InterPro" id="IPR037034">
    <property type="entry name" value="RNA_pol_Rpb2_2_sf"/>
</dbReference>
<dbReference type="InterPro" id="IPR007645">
    <property type="entry name" value="RNA_pol_Rpb2_3"/>
</dbReference>
<dbReference type="InterPro" id="IPR007641">
    <property type="entry name" value="RNA_pol_Rpb2_7"/>
</dbReference>
<dbReference type="InterPro" id="IPR014724">
    <property type="entry name" value="RNA_pol_RPB2_OB-fold"/>
</dbReference>
<dbReference type="NCBIfam" id="NF001616">
    <property type="entry name" value="PRK00405.1"/>
    <property type="match status" value="1"/>
</dbReference>
<dbReference type="NCBIfam" id="TIGR02013">
    <property type="entry name" value="rpoB"/>
    <property type="match status" value="1"/>
</dbReference>
<dbReference type="PANTHER" id="PTHR20856">
    <property type="entry name" value="DNA-DIRECTED RNA POLYMERASE I SUBUNIT 2"/>
    <property type="match status" value="1"/>
</dbReference>
<dbReference type="Pfam" id="PF04563">
    <property type="entry name" value="RNA_pol_Rpb2_1"/>
    <property type="match status" value="1"/>
</dbReference>
<dbReference type="Pfam" id="PF04561">
    <property type="entry name" value="RNA_pol_Rpb2_2"/>
    <property type="match status" value="2"/>
</dbReference>
<dbReference type="Pfam" id="PF04565">
    <property type="entry name" value="RNA_pol_Rpb2_3"/>
    <property type="match status" value="1"/>
</dbReference>
<dbReference type="Pfam" id="PF10385">
    <property type="entry name" value="RNA_pol_Rpb2_45"/>
    <property type="match status" value="1"/>
</dbReference>
<dbReference type="Pfam" id="PF00562">
    <property type="entry name" value="RNA_pol_Rpb2_6"/>
    <property type="match status" value="1"/>
</dbReference>
<dbReference type="Pfam" id="PF04560">
    <property type="entry name" value="RNA_pol_Rpb2_7"/>
    <property type="match status" value="1"/>
</dbReference>
<dbReference type="SUPFAM" id="SSF64484">
    <property type="entry name" value="beta and beta-prime subunits of DNA dependent RNA-polymerase"/>
    <property type="match status" value="1"/>
</dbReference>
<dbReference type="PROSITE" id="PS01166">
    <property type="entry name" value="RNA_POL_BETA"/>
    <property type="match status" value="1"/>
</dbReference>
<comment type="function">
    <text evidence="1">DNA-dependent RNA polymerase catalyzes the transcription of DNA into RNA using the four ribonucleoside triphosphates as substrates.</text>
</comment>
<comment type="catalytic activity">
    <reaction evidence="1">
        <text>RNA(n) + a ribonucleoside 5'-triphosphate = RNA(n+1) + diphosphate</text>
        <dbReference type="Rhea" id="RHEA:21248"/>
        <dbReference type="Rhea" id="RHEA-COMP:14527"/>
        <dbReference type="Rhea" id="RHEA-COMP:17342"/>
        <dbReference type="ChEBI" id="CHEBI:33019"/>
        <dbReference type="ChEBI" id="CHEBI:61557"/>
        <dbReference type="ChEBI" id="CHEBI:140395"/>
        <dbReference type="EC" id="2.7.7.6"/>
    </reaction>
</comment>
<comment type="subunit">
    <text evidence="1">The RNAP catalytic core consists of 2 alpha, 1 beta, 1 beta' and 1 omega subunit. When a sigma factor is associated with the core the holoenzyme is formed, which can initiate transcription.</text>
</comment>
<comment type="similarity">
    <text evidence="1">Belongs to the RNA polymerase beta chain family.</text>
</comment>
<feature type="chain" id="PRO_1000086370" description="DNA-directed RNA polymerase subunit beta">
    <location>
        <begin position="1"/>
        <end position="1358"/>
    </location>
</feature>
<protein>
    <recommendedName>
        <fullName evidence="1">DNA-directed RNA polymerase subunit beta</fullName>
        <shortName evidence="1">RNAP subunit beta</shortName>
        <ecNumber evidence="1">2.7.7.6</ecNumber>
    </recommendedName>
    <alternativeName>
        <fullName evidence="1">RNA polymerase subunit beta</fullName>
    </alternativeName>
    <alternativeName>
        <fullName evidence="1">Transcriptase subunit beta</fullName>
    </alternativeName>
</protein>
<name>RPOB_FRAP2</name>